<dbReference type="EC" id="2.4.1.109" evidence="1"/>
<dbReference type="EMBL" id="U28374">
    <property type="protein sequence ID" value="AAB64743.1"/>
    <property type="molecule type" value="Genomic_DNA"/>
</dbReference>
<dbReference type="EMBL" id="BK006938">
    <property type="protein sequence ID" value="DAA12146.1"/>
    <property type="molecule type" value="Genomic_DNA"/>
</dbReference>
<dbReference type="PIR" id="S61193">
    <property type="entry name" value="S61193"/>
</dbReference>
<dbReference type="RefSeq" id="NP_010593.3">
    <property type="nucleotide sequence ID" value="NM_001180615.3"/>
</dbReference>
<dbReference type="SMR" id="Q06644"/>
<dbReference type="BioGRID" id="32360">
    <property type="interactions" value="124"/>
</dbReference>
<dbReference type="DIP" id="DIP-5150N"/>
<dbReference type="FunCoup" id="Q06644">
    <property type="interactions" value="57"/>
</dbReference>
<dbReference type="IntAct" id="Q06644">
    <property type="interactions" value="25"/>
</dbReference>
<dbReference type="MINT" id="Q06644"/>
<dbReference type="STRING" id="4932.YDR307W"/>
<dbReference type="CAZy" id="GT39">
    <property type="family name" value="Glycosyltransferase Family 39"/>
</dbReference>
<dbReference type="GlyCosmos" id="Q06644">
    <property type="glycosylation" value="1 site, No reported glycans"/>
</dbReference>
<dbReference type="GlyGen" id="Q06644">
    <property type="glycosylation" value="1 site"/>
</dbReference>
<dbReference type="iPTMnet" id="Q06644"/>
<dbReference type="PaxDb" id="4932-YDR307W"/>
<dbReference type="PeptideAtlas" id="Q06644"/>
<dbReference type="EnsemblFungi" id="YDR307W_mRNA">
    <property type="protein sequence ID" value="YDR307W"/>
    <property type="gene ID" value="YDR307W"/>
</dbReference>
<dbReference type="GeneID" id="851902"/>
<dbReference type="KEGG" id="sce:YDR307W"/>
<dbReference type="AGR" id="SGD:S000002715"/>
<dbReference type="SGD" id="S000002715">
    <property type="gene designation" value="PMT7"/>
</dbReference>
<dbReference type="VEuPathDB" id="FungiDB:YDR307W"/>
<dbReference type="eggNOG" id="KOG3359">
    <property type="taxonomic scope" value="Eukaryota"/>
</dbReference>
<dbReference type="HOGENOM" id="CLU_008438_2_1_1"/>
<dbReference type="InParanoid" id="Q06644"/>
<dbReference type="OMA" id="SEVYHAD"/>
<dbReference type="OrthoDB" id="292747at2759"/>
<dbReference type="BioCyc" id="YEAST:G3O-29866-MONOMER"/>
<dbReference type="BRENDA" id="2.4.1.109">
    <property type="organism ID" value="984"/>
</dbReference>
<dbReference type="UniPathway" id="UPA00378"/>
<dbReference type="BioGRID-ORCS" id="851902">
    <property type="hits" value="0 hits in 10 CRISPR screens"/>
</dbReference>
<dbReference type="PRO" id="PR:Q06644"/>
<dbReference type="Proteomes" id="UP000002311">
    <property type="component" value="Chromosome IV"/>
</dbReference>
<dbReference type="RNAct" id="Q06644">
    <property type="molecule type" value="protein"/>
</dbReference>
<dbReference type="GO" id="GO:0005783">
    <property type="term" value="C:endoplasmic reticulum"/>
    <property type="evidence" value="ECO:0007005"/>
    <property type="project" value="SGD"/>
</dbReference>
<dbReference type="GO" id="GO:0005789">
    <property type="term" value="C:endoplasmic reticulum membrane"/>
    <property type="evidence" value="ECO:0007669"/>
    <property type="project" value="UniProtKB-SubCell"/>
</dbReference>
<dbReference type="GO" id="GO:0004169">
    <property type="term" value="F:dolichyl-phosphate-mannose-protein mannosyltransferase activity"/>
    <property type="evidence" value="ECO:0000318"/>
    <property type="project" value="GO_Central"/>
</dbReference>
<dbReference type="GO" id="GO:0035269">
    <property type="term" value="P:protein O-linked mannosylation"/>
    <property type="evidence" value="ECO:0000318"/>
    <property type="project" value="GO_Central"/>
</dbReference>
<dbReference type="CDD" id="cd23286">
    <property type="entry name" value="beta-trefoil_MIR_PMT7-like"/>
    <property type="match status" value="1"/>
</dbReference>
<dbReference type="Gene3D" id="2.80.10.50">
    <property type="match status" value="1"/>
</dbReference>
<dbReference type="InterPro" id="IPR027005">
    <property type="entry name" value="GlyclTrfase_39-like"/>
</dbReference>
<dbReference type="InterPro" id="IPR003342">
    <property type="entry name" value="Glyco_trans_39/83"/>
</dbReference>
<dbReference type="InterPro" id="IPR036300">
    <property type="entry name" value="MIR_dom_sf"/>
</dbReference>
<dbReference type="InterPro" id="IPR016093">
    <property type="entry name" value="MIR_motif"/>
</dbReference>
<dbReference type="PANTHER" id="PTHR10050">
    <property type="entry name" value="DOLICHYL-PHOSPHATE-MANNOSE--PROTEIN MANNOSYLTRANSFERASE"/>
    <property type="match status" value="1"/>
</dbReference>
<dbReference type="PANTHER" id="PTHR10050:SF46">
    <property type="entry name" value="PROTEIN O-MANNOSYL-TRANSFERASE 2"/>
    <property type="match status" value="1"/>
</dbReference>
<dbReference type="Pfam" id="PF02815">
    <property type="entry name" value="MIR"/>
    <property type="match status" value="1"/>
</dbReference>
<dbReference type="Pfam" id="PF02366">
    <property type="entry name" value="PMT"/>
    <property type="match status" value="1"/>
</dbReference>
<dbReference type="SMART" id="SM00472">
    <property type="entry name" value="MIR"/>
    <property type="match status" value="3"/>
</dbReference>
<dbReference type="SUPFAM" id="SSF82109">
    <property type="entry name" value="MIR domain"/>
    <property type="match status" value="1"/>
</dbReference>
<dbReference type="PROSITE" id="PS50919">
    <property type="entry name" value="MIR"/>
    <property type="match status" value="3"/>
</dbReference>
<sequence length="662" mass="77570">MKDLRLQGPYRKYIPYNIFQQCGIGHLKTLDYIFAFLIVITNFTLIWKSHSSSFWNRPWDNNSEQELSQLIQFYLDKAFYIHELPPFTIQFYSIIRRLKIAENLRYVSLFLNSSTLGFLFLITRRINCSRLISATGLLILSNWETFRNEGTIISFDSLEWCLFSVVIYSFISISIAKLGTTNWFANVITLSISLGLAISSKFIGIVTWAFVILSFVRQFDRLISDVKVTTIQIIKFVILCLLFVLIIPGSIFIISYSNLLSNFKTDTPQFSKYMSTYFKSYLRGPQVQPSRLYYGSTITLRHLDSMVGYLASHDISYPSDVDEQLVALSFEEFAADNEWLIEHPTLNLSFSEVYHADQLIPVEFGQSIKLRHKSTGKLLRASTAKPPISEQDYDFQISCTKDSNYEGGMDERWDVLLIKDEINNDKKDNADDKYIKPLQSEIRFYNNGQRCGLLGHDLRLPEWGRFEQEVLCMEYPVIPRTTFLIDSVQLPVDFQVPMIEYYIGKISSSAEFNHTLSWSQFLYLFKEYIFKQYKYNYYIKYGKNKVTFEDAFAVEKWPITLDTDSPVWFNFAWYGSLLSMIIFMCVQCKRMISWNPWTTAEPSFSIKWEVYNEFGWECIVGWFLHFYIFTMSPHFNLGKKLYFQSFFFSVLCLLESLDCLAK</sequence>
<keyword id="KW-0256">Endoplasmic reticulum</keyword>
<keyword id="KW-0325">Glycoprotein</keyword>
<keyword id="KW-0328">Glycosyltransferase</keyword>
<keyword id="KW-0472">Membrane</keyword>
<keyword id="KW-1185">Reference proteome</keyword>
<keyword id="KW-0677">Repeat</keyword>
<keyword id="KW-0808">Transferase</keyword>
<keyword id="KW-0812">Transmembrane</keyword>
<keyword id="KW-1133">Transmembrane helix</keyword>
<organism>
    <name type="scientific">Saccharomyces cerevisiae (strain ATCC 204508 / S288c)</name>
    <name type="common">Baker's yeast</name>
    <dbReference type="NCBI Taxonomy" id="559292"/>
    <lineage>
        <taxon>Eukaryota</taxon>
        <taxon>Fungi</taxon>
        <taxon>Dikarya</taxon>
        <taxon>Ascomycota</taxon>
        <taxon>Saccharomycotina</taxon>
        <taxon>Saccharomycetes</taxon>
        <taxon>Saccharomycetales</taxon>
        <taxon>Saccharomycetaceae</taxon>
        <taxon>Saccharomyces</taxon>
    </lineage>
</organism>
<proteinExistence type="evidence at protein level"/>
<evidence type="ECO:0000250" key="1">
    <source>
        <dbReference type="UniProtKB" id="P33775"/>
    </source>
</evidence>
<evidence type="ECO:0000255" key="2"/>
<evidence type="ECO:0000255" key="3">
    <source>
        <dbReference type="PROSITE-ProRule" id="PRU00131"/>
    </source>
</evidence>
<evidence type="ECO:0000305" key="4"/>
<evidence type="ECO:0000312" key="5">
    <source>
        <dbReference type="SGD" id="S000002715"/>
    </source>
</evidence>
<comment type="function">
    <text evidence="1">Probable protein O-mannosyltransferase involved in O-glycosylation which is essential for cell wall rigidity. Transfers mannose from Dol-P-mannose to Ser or Thr residues on proteins.</text>
</comment>
<comment type="catalytic activity">
    <reaction evidence="1">
        <text>a di-trans,poly-cis-dolichyl beta-D-mannosyl phosphate + L-seryl-[protein] = 3-O-(alpha-D-mannosyl)-L-seryl-[protein] + a di-trans,poly-cis-dolichyl phosphate + H(+)</text>
        <dbReference type="Rhea" id="RHEA:17377"/>
        <dbReference type="Rhea" id="RHEA-COMP:9863"/>
        <dbReference type="Rhea" id="RHEA-COMP:13546"/>
        <dbReference type="Rhea" id="RHEA-COMP:19498"/>
        <dbReference type="Rhea" id="RHEA-COMP:19501"/>
        <dbReference type="ChEBI" id="CHEBI:15378"/>
        <dbReference type="ChEBI" id="CHEBI:29999"/>
        <dbReference type="ChEBI" id="CHEBI:57683"/>
        <dbReference type="ChEBI" id="CHEBI:58211"/>
        <dbReference type="ChEBI" id="CHEBI:137321"/>
        <dbReference type="EC" id="2.4.1.109"/>
    </reaction>
</comment>
<comment type="catalytic activity">
    <reaction evidence="1">
        <text>a di-trans,poly-cis-dolichyl beta-D-mannosyl phosphate + L-threonyl-[protein] = 3-O-(alpha-D-mannosyl)-L-threonyl-[protein] + a di-trans,poly-cis-dolichyl phosphate + H(+)</text>
        <dbReference type="Rhea" id="RHEA:53396"/>
        <dbReference type="Rhea" id="RHEA-COMP:11060"/>
        <dbReference type="Rhea" id="RHEA-COMP:13547"/>
        <dbReference type="Rhea" id="RHEA-COMP:19498"/>
        <dbReference type="Rhea" id="RHEA-COMP:19501"/>
        <dbReference type="ChEBI" id="CHEBI:15378"/>
        <dbReference type="ChEBI" id="CHEBI:30013"/>
        <dbReference type="ChEBI" id="CHEBI:57683"/>
        <dbReference type="ChEBI" id="CHEBI:58211"/>
        <dbReference type="ChEBI" id="CHEBI:137323"/>
        <dbReference type="EC" id="2.4.1.109"/>
    </reaction>
</comment>
<comment type="pathway">
    <text evidence="4">Protein modification; protein glycosylation.</text>
</comment>
<comment type="subcellular location">
    <subcellularLocation>
        <location evidence="1">Endoplasmic reticulum membrane</location>
        <topology evidence="2">Multi-pass membrane protein</topology>
    </subcellularLocation>
</comment>
<comment type="similarity">
    <text evidence="4">Belongs to the glycosyltransferase 39 family.</text>
</comment>
<gene>
    <name evidence="5" type="primary">PMT7</name>
    <name evidence="5" type="ordered locus">YDR307W</name>
    <name evidence="5" type="ORF">D9740.4</name>
</gene>
<protein>
    <recommendedName>
        <fullName evidence="4">Probable dolichyl-phosphate-mannose--protein mannosyltransferase 7</fullName>
        <ecNumber evidence="1">2.4.1.109</ecNumber>
    </recommendedName>
</protein>
<reference key="1">
    <citation type="journal article" date="1997" name="Nature">
        <title>The nucleotide sequence of Saccharomyces cerevisiae chromosome IV.</title>
        <authorList>
            <person name="Jacq C."/>
            <person name="Alt-Moerbe J."/>
            <person name="Andre B."/>
            <person name="Arnold W."/>
            <person name="Bahr A."/>
            <person name="Ballesta J.P.G."/>
            <person name="Bargues M."/>
            <person name="Baron L."/>
            <person name="Becker A."/>
            <person name="Biteau N."/>
            <person name="Bloecker H."/>
            <person name="Blugeon C."/>
            <person name="Boskovic J."/>
            <person name="Brandt P."/>
            <person name="Brueckner M."/>
            <person name="Buitrago M.J."/>
            <person name="Coster F."/>
            <person name="Delaveau T."/>
            <person name="del Rey F."/>
            <person name="Dujon B."/>
            <person name="Eide L.G."/>
            <person name="Garcia-Cantalejo J.M."/>
            <person name="Goffeau A."/>
            <person name="Gomez-Peris A."/>
            <person name="Granotier C."/>
            <person name="Hanemann V."/>
            <person name="Hankeln T."/>
            <person name="Hoheisel J.D."/>
            <person name="Jaeger W."/>
            <person name="Jimenez A."/>
            <person name="Jonniaux J.-L."/>
            <person name="Kraemer C."/>
            <person name="Kuester H."/>
            <person name="Laamanen P."/>
            <person name="Legros Y."/>
            <person name="Louis E.J."/>
            <person name="Moeller-Rieker S."/>
            <person name="Monnet A."/>
            <person name="Moro M."/>
            <person name="Mueller-Auer S."/>
            <person name="Nussbaumer B."/>
            <person name="Paricio N."/>
            <person name="Paulin L."/>
            <person name="Perea J."/>
            <person name="Perez-Alonso M."/>
            <person name="Perez-Ortin J.E."/>
            <person name="Pohl T.M."/>
            <person name="Prydz H."/>
            <person name="Purnelle B."/>
            <person name="Rasmussen S.W."/>
            <person name="Remacha M.A."/>
            <person name="Revuelta J.L."/>
            <person name="Rieger M."/>
            <person name="Salom D."/>
            <person name="Saluz H.P."/>
            <person name="Saiz J.E."/>
            <person name="Saren A.-M."/>
            <person name="Schaefer M."/>
            <person name="Scharfe M."/>
            <person name="Schmidt E.R."/>
            <person name="Schneider C."/>
            <person name="Scholler P."/>
            <person name="Schwarz S."/>
            <person name="Soler-Mira A."/>
            <person name="Urrestarazu L.A."/>
            <person name="Verhasselt P."/>
            <person name="Vissers S."/>
            <person name="Voet M."/>
            <person name="Volckaert G."/>
            <person name="Wagner G."/>
            <person name="Wambutt R."/>
            <person name="Wedler E."/>
            <person name="Wedler H."/>
            <person name="Woelfl S."/>
            <person name="Harris D.E."/>
            <person name="Bowman S."/>
            <person name="Brown D."/>
            <person name="Churcher C.M."/>
            <person name="Connor R."/>
            <person name="Dedman K."/>
            <person name="Gentles S."/>
            <person name="Hamlin N."/>
            <person name="Hunt S."/>
            <person name="Jones L."/>
            <person name="McDonald S."/>
            <person name="Murphy L.D."/>
            <person name="Niblett D."/>
            <person name="Odell C."/>
            <person name="Oliver K."/>
            <person name="Rajandream M.A."/>
            <person name="Richards C."/>
            <person name="Shore L."/>
            <person name="Walsh S.V."/>
            <person name="Barrell B.G."/>
            <person name="Dietrich F.S."/>
            <person name="Mulligan J.T."/>
            <person name="Allen E."/>
            <person name="Araujo R."/>
            <person name="Aviles E."/>
            <person name="Berno A."/>
            <person name="Carpenter J."/>
            <person name="Chen E."/>
            <person name="Cherry J.M."/>
            <person name="Chung E."/>
            <person name="Duncan M."/>
            <person name="Hunicke-Smith S."/>
            <person name="Hyman R.W."/>
            <person name="Komp C."/>
            <person name="Lashkari D."/>
            <person name="Lew H."/>
            <person name="Lin D."/>
            <person name="Mosedale D."/>
            <person name="Nakahara K."/>
            <person name="Namath A."/>
            <person name="Oefner P."/>
            <person name="Oh C."/>
            <person name="Petel F.X."/>
            <person name="Roberts D."/>
            <person name="Schramm S."/>
            <person name="Schroeder M."/>
            <person name="Shogren T."/>
            <person name="Shroff N."/>
            <person name="Winant A."/>
            <person name="Yelton M.A."/>
            <person name="Botstein D."/>
            <person name="Davis R.W."/>
            <person name="Johnston M."/>
            <person name="Andrews S."/>
            <person name="Brinkman R."/>
            <person name="Cooper J."/>
            <person name="Ding H."/>
            <person name="Du Z."/>
            <person name="Favello A."/>
            <person name="Fulton L."/>
            <person name="Gattung S."/>
            <person name="Greco T."/>
            <person name="Hallsworth K."/>
            <person name="Hawkins J."/>
            <person name="Hillier L.W."/>
            <person name="Jier M."/>
            <person name="Johnson D."/>
            <person name="Johnston L."/>
            <person name="Kirsten J."/>
            <person name="Kucaba T."/>
            <person name="Langston Y."/>
            <person name="Latreille P."/>
            <person name="Le T."/>
            <person name="Mardis E."/>
            <person name="Menezes S."/>
            <person name="Miller N."/>
            <person name="Nhan M."/>
            <person name="Pauley A."/>
            <person name="Peluso D."/>
            <person name="Rifkin L."/>
            <person name="Riles L."/>
            <person name="Taich A."/>
            <person name="Trevaskis E."/>
            <person name="Vignati D."/>
            <person name="Wilcox L."/>
            <person name="Wohldman P."/>
            <person name="Vaudin M."/>
            <person name="Wilson R."/>
            <person name="Waterston R."/>
            <person name="Albermann K."/>
            <person name="Hani J."/>
            <person name="Heumann K."/>
            <person name="Kleine K."/>
            <person name="Mewes H.-W."/>
            <person name="Zollner A."/>
            <person name="Zaccaria P."/>
        </authorList>
    </citation>
    <scope>NUCLEOTIDE SEQUENCE [LARGE SCALE GENOMIC DNA]</scope>
    <source>
        <strain>ATCC 204508 / S288c</strain>
    </source>
</reference>
<reference key="2">
    <citation type="journal article" date="2014" name="G3 (Bethesda)">
        <title>The reference genome sequence of Saccharomyces cerevisiae: Then and now.</title>
        <authorList>
            <person name="Engel S.R."/>
            <person name="Dietrich F.S."/>
            <person name="Fisk D.G."/>
            <person name="Binkley G."/>
            <person name="Balakrishnan R."/>
            <person name="Costanzo M.C."/>
            <person name="Dwight S.S."/>
            <person name="Hitz B.C."/>
            <person name="Karra K."/>
            <person name="Nash R.S."/>
            <person name="Weng S."/>
            <person name="Wong E.D."/>
            <person name="Lloyd P."/>
            <person name="Skrzypek M.S."/>
            <person name="Miyasato S.R."/>
            <person name="Simison M."/>
            <person name="Cherry J.M."/>
        </authorList>
    </citation>
    <scope>GENOME REANNOTATION</scope>
    <source>
        <strain>ATCC 204508 / S288c</strain>
    </source>
</reference>
<reference key="3">
    <citation type="journal article" date="2006" name="Proc. Natl. Acad. Sci. U.S.A.">
        <title>A global topology map of the Saccharomyces cerevisiae membrane proteome.</title>
        <authorList>
            <person name="Kim H."/>
            <person name="Melen K."/>
            <person name="Oesterberg M."/>
            <person name="von Heijne G."/>
        </authorList>
    </citation>
    <scope>TOPOLOGY [LARGE SCALE ANALYSIS]</scope>
    <source>
        <strain>ATCC 208353 / W303-1A</strain>
    </source>
</reference>
<accession>Q06644</accession>
<accession>D6VST6</accession>
<name>PMT7_YEAST</name>
<feature type="chain" id="PRO_0000121497" description="Probable dolichyl-phosphate-mannose--protein mannosyltransferase 7">
    <location>
        <begin position="1"/>
        <end position="662"/>
    </location>
</feature>
<feature type="topological domain" description="Lumenal" evidence="2">
    <location>
        <begin position="1"/>
        <end position="26"/>
    </location>
</feature>
<feature type="transmembrane region" description="Helical" evidence="2">
    <location>
        <begin position="27"/>
        <end position="47"/>
    </location>
</feature>
<feature type="topological domain" description="Cytoplasmic" evidence="2">
    <location>
        <begin position="48"/>
        <end position="159"/>
    </location>
</feature>
<feature type="transmembrane region" description="Helical" evidence="2">
    <location>
        <begin position="160"/>
        <end position="180"/>
    </location>
</feature>
<feature type="topological domain" description="Lumenal" evidence="2">
    <location>
        <begin position="181"/>
        <end position="195"/>
    </location>
</feature>
<feature type="transmembrane region" description="Helical" evidence="2">
    <location>
        <begin position="196"/>
        <end position="216"/>
    </location>
</feature>
<feature type="topological domain" description="Cytoplasmic" evidence="2">
    <location>
        <begin position="217"/>
        <end position="235"/>
    </location>
</feature>
<feature type="transmembrane region" description="Helical" evidence="2">
    <location>
        <begin position="236"/>
        <end position="256"/>
    </location>
</feature>
<feature type="topological domain" description="Lumenal" evidence="2">
    <location>
        <begin position="257"/>
        <end position="482"/>
    </location>
</feature>
<feature type="transmembrane region" description="Helical" evidence="2">
    <location>
        <begin position="483"/>
        <end position="503"/>
    </location>
</feature>
<feature type="topological domain" description="Cytoplasmic" evidence="2">
    <location>
        <begin position="504"/>
        <end position="565"/>
    </location>
</feature>
<feature type="transmembrane region" description="Helical" evidence="2">
    <location>
        <begin position="566"/>
        <end position="586"/>
    </location>
</feature>
<feature type="topological domain" description="Lumenal" evidence="2">
    <location>
        <begin position="587"/>
        <end position="617"/>
    </location>
</feature>
<feature type="transmembrane region" description="Helical" evidence="2">
    <location>
        <begin position="618"/>
        <end position="638"/>
    </location>
</feature>
<feature type="topological domain" description="Cytoplasmic" evidence="2">
    <location>
        <begin position="639"/>
        <end position="662"/>
    </location>
</feature>
<feature type="domain" description="MIR 1" evidence="3">
    <location>
        <begin position="289"/>
        <end position="344"/>
    </location>
</feature>
<feature type="domain" description="MIR 2" evidence="3">
    <location>
        <begin position="359"/>
        <end position="418"/>
    </location>
</feature>
<feature type="domain" description="MIR 3" evidence="3">
    <location>
        <begin position="432"/>
        <end position="488"/>
    </location>
</feature>
<feature type="glycosylation site" description="N-linked (GlcNAc...) asparagine" evidence="2">
    <location>
        <position position="347"/>
    </location>
</feature>